<sequence>MEWNTFFLVILIIIIKSTTPQITQRPPVENISTYHADWDTPLYTHPSNCRDDSFVPIRPAQLRCPHEFEDINKGLVSVPTRIIHLPLSVTSVSAVASGHYLHRVTYRVTCSTSFFGGQTIEKTILEAKLSRQEATDEASKDHEYPFFPEPSCIWMKNNVHKDITHYYKTPKTVSVDLYSRKFLNPDFIEGVCTTSPCQTHWQGVYWVGATPKAHCPTSETLEGHLFTRTHDHRVVKAIVAGHHPWGLTMACTVTFCGTEWIKTDLGDLIQVTGPGGTRKLTPNKCVNTDIQMRGATDDFSYLNHLITNMAQRTECLDAHSDITASGKVSSFLLSKFRPSHPGPGKAHYLLDGQIMRGDCDYEAVVSINYNRAQYKTMNNTWKSWKRVDNNTDGYDGMIFGDKLIIPDIEKYQSVYDSGMLVQRNLVEVPHLSIVFVSNTSDLSTNHIHTNLIPSDWSFNWSLWPSLSGMGVVGGAFLLLVLCCCCKASPPIPNYGIPMQQFSRSQTV</sequence>
<feature type="signal peptide" evidence="2">
    <location>
        <begin position="1"/>
        <end position="20"/>
    </location>
</feature>
<feature type="chain" id="PRO_0000041001" description="Spike glycoprotein">
    <location>
        <begin position="21"/>
        <end position="507"/>
    </location>
</feature>
<feature type="topological domain" description="Virion surface" evidence="2">
    <location>
        <begin position="21"/>
        <end position="461"/>
    </location>
</feature>
<feature type="transmembrane region" description="Helical" evidence="2">
    <location>
        <begin position="462"/>
        <end position="482"/>
    </location>
</feature>
<feature type="topological domain" description="Intravirion" evidence="2">
    <location>
        <begin position="483"/>
        <end position="507"/>
    </location>
</feature>
<feature type="glycosylation site" description="N-linked (GlcNAc...) asparagine; by host" evidence="2">
    <location>
        <position position="30"/>
    </location>
</feature>
<feature type="glycosylation site" description="N-linked (GlcNAc...) asparagine; by host" evidence="2">
    <location>
        <position position="378"/>
    </location>
</feature>
<feature type="glycosylation site" description="N-linked (GlcNAc...) asparagine; by host" evidence="2">
    <location>
        <position position="389"/>
    </location>
</feature>
<feature type="glycosylation site" description="N-linked (GlcNAc...) asparagine; by host" evidence="2">
    <location>
        <position position="438"/>
    </location>
</feature>
<feature type="glycosylation site" description="N-linked (GlcNAc...) asparagine; by host" evidence="2">
    <location>
        <position position="459"/>
    </location>
</feature>
<protein>
    <recommendedName>
        <fullName>Spike glycoprotein</fullName>
    </recommendedName>
</protein>
<organismHost>
    <name type="scientific">Coregonus lavaretus</name>
    <name type="common">Common whitefish</name>
    <name type="synonym">Salmo lavaretus</name>
    <dbReference type="NCBI Taxonomy" id="59291"/>
</organismHost>
<organismHost>
    <name type="scientific">Esox lucius</name>
    <name type="common">Northern pike</name>
    <dbReference type="NCBI Taxonomy" id="8010"/>
</organismHost>
<organismHost>
    <name type="scientific">Oncorhynchus kisutch</name>
    <name type="common">Coho salmon</name>
    <name type="synonym">Salmo kisutch</name>
    <dbReference type="NCBI Taxonomy" id="8019"/>
</organismHost>
<organismHost>
    <name type="scientific">Oncorhynchus mykiss</name>
    <name type="common">Rainbow trout</name>
    <name type="synonym">Salmo gairdneri</name>
    <dbReference type="NCBI Taxonomy" id="8022"/>
</organismHost>
<organismHost>
    <name type="scientific">Oncorhynchus tshawytscha</name>
    <name type="common">Chinook salmon</name>
    <name type="synonym">Salmo tshawytscha</name>
    <dbReference type="NCBI Taxonomy" id="74940"/>
</organismHost>
<organismHost>
    <name type="scientific">Salmo trutta</name>
    <name type="common">Brown trout</name>
    <dbReference type="NCBI Taxonomy" id="8032"/>
</organismHost>
<organismHost>
    <name type="scientific">Salvelinus namaycush</name>
    <name type="common">Lake trout</name>
    <name type="synonym">Salmo namaycush</name>
    <dbReference type="NCBI Taxonomy" id="8040"/>
</organismHost>
<organismHost>
    <name type="scientific">Thymallus thymallus</name>
    <name type="common">Grayling</name>
    <name type="synonym">Salmo thymallus</name>
    <dbReference type="NCBI Taxonomy" id="36185"/>
</organismHost>
<proteinExistence type="inferred from homology"/>
<organism>
    <name type="scientific">Viral hemorrhagic septicemia virus (strain 07-71)</name>
    <name type="common">VHSV</name>
    <dbReference type="NCBI Taxonomy" id="11288"/>
    <lineage>
        <taxon>Viruses</taxon>
        <taxon>Riboviria</taxon>
        <taxon>Orthornavirae</taxon>
        <taxon>Negarnaviricota</taxon>
        <taxon>Haploviricotina</taxon>
        <taxon>Monjiviricetes</taxon>
        <taxon>Mononegavirales</taxon>
        <taxon>Rhabdoviridae</taxon>
        <taxon>Gammarhabdovirinae</taxon>
        <taxon>Novirhabdovirus</taxon>
        <taxon>Novirhabdovirus piscine</taxon>
    </lineage>
</organism>
<accession>P27662</accession>
<gene>
    <name type="primary">G</name>
</gene>
<dbReference type="EMBL" id="X59148">
    <property type="protein sequence ID" value="CAA41859.1"/>
    <property type="molecule type" value="Genomic_RNA"/>
</dbReference>
<dbReference type="PIR" id="S15476">
    <property type="entry name" value="S15476"/>
</dbReference>
<dbReference type="SMR" id="P27662"/>
<dbReference type="GlyCosmos" id="P27662">
    <property type="glycosylation" value="5 sites, No reported glycans"/>
</dbReference>
<dbReference type="ABCD" id="P27662">
    <property type="antibodies" value="3 sequenced antibodies"/>
</dbReference>
<dbReference type="GO" id="GO:0016020">
    <property type="term" value="C:membrane"/>
    <property type="evidence" value="ECO:0007669"/>
    <property type="project" value="UniProtKB-KW"/>
</dbReference>
<dbReference type="GO" id="GO:0019031">
    <property type="term" value="C:viral envelope"/>
    <property type="evidence" value="ECO:0007669"/>
    <property type="project" value="UniProtKB-KW"/>
</dbReference>
<dbReference type="GO" id="GO:0055036">
    <property type="term" value="C:virion membrane"/>
    <property type="evidence" value="ECO:0007669"/>
    <property type="project" value="UniProtKB-SubCell"/>
</dbReference>
<dbReference type="GO" id="GO:0046718">
    <property type="term" value="P:symbiont entry into host cell"/>
    <property type="evidence" value="ECO:0007669"/>
    <property type="project" value="UniProtKB-KW"/>
</dbReference>
<dbReference type="GO" id="GO:0019062">
    <property type="term" value="P:virion attachment to host cell"/>
    <property type="evidence" value="ECO:0007669"/>
    <property type="project" value="UniProtKB-KW"/>
</dbReference>
<dbReference type="InterPro" id="IPR055447">
    <property type="entry name" value="Rhabdo_glycop_CD"/>
</dbReference>
<dbReference type="InterPro" id="IPR001903">
    <property type="entry name" value="Rhabdo_glycop_FD"/>
</dbReference>
<dbReference type="InterPro" id="IPR002417">
    <property type="entry name" value="Spike_prot"/>
</dbReference>
<dbReference type="Pfam" id="PF24833">
    <property type="entry name" value="Rhabdo_glycop_CD"/>
    <property type="match status" value="1"/>
</dbReference>
<dbReference type="Pfam" id="PF00974">
    <property type="entry name" value="Rhabdo_glycop_FD"/>
    <property type="match status" value="1"/>
</dbReference>
<dbReference type="PRINTS" id="PR00796">
    <property type="entry name" value="SPIKEPROTEIN"/>
</dbReference>
<dbReference type="SUPFAM" id="SSF161008">
    <property type="entry name" value="Viral glycoprotein ectodomain-like"/>
    <property type="match status" value="1"/>
</dbReference>
<reference key="1">
    <citation type="journal article" date="1991" name="Biochim. Biophys. Acta">
        <title>Sequence of a cDNA carrying the glycoprotein gene and part of the matrix protein M2 gene of viral haemorrhagic scepticaemia virus, a fish rhabdovirus.</title>
        <authorList>
            <person name="Thiry M."/>
            <person name="Lecoq-Xhonneux F."/>
            <person name="Dheur I."/>
            <person name="Renard A."/>
            <person name="de Kinkelin P."/>
        </authorList>
    </citation>
    <scope>NUCLEOTIDE SEQUENCE [GENOMIC RNA]</scope>
</reference>
<evidence type="ECO:0000250" key="1"/>
<evidence type="ECO:0000255" key="2"/>
<evidence type="ECO:0000305" key="3"/>
<keyword id="KW-0325">Glycoprotein</keyword>
<keyword id="KW-0945">Host-virus interaction</keyword>
<keyword id="KW-0472">Membrane</keyword>
<keyword id="KW-0732">Signal</keyword>
<keyword id="KW-0812">Transmembrane</keyword>
<keyword id="KW-1133">Transmembrane helix</keyword>
<keyword id="KW-1161">Viral attachment to host cell</keyword>
<keyword id="KW-0261">Viral envelope protein</keyword>
<keyword id="KW-0946">Virion</keyword>
<keyword id="KW-1160">Virus entry into host cell</keyword>
<name>GLYCO_VHSV0</name>
<comment type="function">
    <text>This protein forms spikes on the surface of the virion. It is responsible both for the binding of the virus to susceptible host cells and for inducing the uptake of the virus by the cell. The interaction between the internal components of the virion and the portion of the glycoprotein exposed on the cytoplasmic face of the plasma membrane probably directs envelopment and virus budding.</text>
</comment>
<comment type="subcellular location">
    <subcellularLocation>
        <location evidence="1">Virion membrane</location>
        <topology evidence="1">Single-pass type I membrane protein</topology>
    </subcellularLocation>
</comment>
<comment type="similarity">
    <text evidence="3">Belongs to the novirhabdovirus glycoprotein family.</text>
</comment>